<dbReference type="EC" id="6.3.1.5" evidence="1"/>
<dbReference type="EMBL" id="AE016879">
    <property type="protein sequence ID" value="AAP25889.1"/>
    <property type="molecule type" value="Genomic_DNA"/>
</dbReference>
<dbReference type="EMBL" id="AE017334">
    <property type="protein sequence ID" value="AAT31119.1"/>
    <property type="molecule type" value="Genomic_DNA"/>
</dbReference>
<dbReference type="EMBL" id="AE017225">
    <property type="protein sequence ID" value="AAT54170.1"/>
    <property type="molecule type" value="Genomic_DNA"/>
</dbReference>
<dbReference type="RefSeq" id="NP_844403.1">
    <property type="nucleotide sequence ID" value="NC_003997.3"/>
</dbReference>
<dbReference type="RefSeq" id="WP_000174879.1">
    <property type="nucleotide sequence ID" value="NZ_WXXJ01000029.1"/>
</dbReference>
<dbReference type="RefSeq" id="YP_028119.1">
    <property type="nucleotide sequence ID" value="NC_005945.1"/>
</dbReference>
<dbReference type="PDB" id="2PZ8">
    <property type="method" value="X-ray"/>
    <property type="resolution" value="2.00 A"/>
    <property type="chains" value="A/B=1-272"/>
</dbReference>
<dbReference type="PDB" id="2PZA">
    <property type="method" value="X-ray"/>
    <property type="resolution" value="2.40 A"/>
    <property type="chains" value="A/B=1-272"/>
</dbReference>
<dbReference type="PDB" id="2PZB">
    <property type="method" value="X-ray"/>
    <property type="resolution" value="1.90 A"/>
    <property type="chains" value="A/B/C/D=1-272"/>
</dbReference>
<dbReference type="PDBsum" id="2PZ8"/>
<dbReference type="PDBsum" id="2PZA"/>
<dbReference type="PDBsum" id="2PZB"/>
<dbReference type="SMR" id="Q81RP3"/>
<dbReference type="STRING" id="261594.GBAA_1998"/>
<dbReference type="BindingDB" id="Q81RP3"/>
<dbReference type="ChEMBL" id="CHEMBL5271"/>
<dbReference type="DNASU" id="1087061"/>
<dbReference type="GeneID" id="75085226"/>
<dbReference type="KEGG" id="ban:BA_1998"/>
<dbReference type="KEGG" id="bar:GBAA_1998"/>
<dbReference type="KEGG" id="bat:BAS1855"/>
<dbReference type="PATRIC" id="fig|198094.11.peg.1971"/>
<dbReference type="eggNOG" id="COG0171">
    <property type="taxonomic scope" value="Bacteria"/>
</dbReference>
<dbReference type="HOGENOM" id="CLU_059327_3_0_9"/>
<dbReference type="OMA" id="NKDEDFY"/>
<dbReference type="OrthoDB" id="9803818at2"/>
<dbReference type="BRENDA" id="6.3.1.5">
    <property type="organism ID" value="634"/>
</dbReference>
<dbReference type="UniPathway" id="UPA00253">
    <property type="reaction ID" value="UER00333"/>
</dbReference>
<dbReference type="EvolutionaryTrace" id="Q81RP3"/>
<dbReference type="Proteomes" id="UP000000427">
    <property type="component" value="Chromosome"/>
</dbReference>
<dbReference type="Proteomes" id="UP000000594">
    <property type="component" value="Chromosome"/>
</dbReference>
<dbReference type="GO" id="GO:0005737">
    <property type="term" value="C:cytoplasm"/>
    <property type="evidence" value="ECO:0007669"/>
    <property type="project" value="InterPro"/>
</dbReference>
<dbReference type="GO" id="GO:0005524">
    <property type="term" value="F:ATP binding"/>
    <property type="evidence" value="ECO:0007669"/>
    <property type="project" value="UniProtKB-UniRule"/>
</dbReference>
<dbReference type="GO" id="GO:0004359">
    <property type="term" value="F:glutaminase activity"/>
    <property type="evidence" value="ECO:0007669"/>
    <property type="project" value="InterPro"/>
</dbReference>
<dbReference type="GO" id="GO:0046872">
    <property type="term" value="F:metal ion binding"/>
    <property type="evidence" value="ECO:0007669"/>
    <property type="project" value="UniProtKB-KW"/>
</dbReference>
<dbReference type="GO" id="GO:0003952">
    <property type="term" value="F:NAD+ synthase (glutamine-hydrolyzing) activity"/>
    <property type="evidence" value="ECO:0007669"/>
    <property type="project" value="InterPro"/>
</dbReference>
<dbReference type="GO" id="GO:0008795">
    <property type="term" value="F:NAD+ synthase activity"/>
    <property type="evidence" value="ECO:0007669"/>
    <property type="project" value="UniProtKB-UniRule"/>
</dbReference>
<dbReference type="GO" id="GO:0009435">
    <property type="term" value="P:NAD biosynthetic process"/>
    <property type="evidence" value="ECO:0007669"/>
    <property type="project" value="UniProtKB-UniRule"/>
</dbReference>
<dbReference type="CDD" id="cd00553">
    <property type="entry name" value="NAD_synthase"/>
    <property type="match status" value="1"/>
</dbReference>
<dbReference type="FunFam" id="3.40.50.620:FF:000015">
    <property type="entry name" value="NH(3)-dependent NAD(+) synthetase"/>
    <property type="match status" value="1"/>
</dbReference>
<dbReference type="Gene3D" id="3.40.50.620">
    <property type="entry name" value="HUPs"/>
    <property type="match status" value="1"/>
</dbReference>
<dbReference type="HAMAP" id="MF_00193">
    <property type="entry name" value="NadE_ammonia_dep"/>
    <property type="match status" value="1"/>
</dbReference>
<dbReference type="InterPro" id="IPR022310">
    <property type="entry name" value="NAD/GMP_synthase"/>
</dbReference>
<dbReference type="InterPro" id="IPR003694">
    <property type="entry name" value="NAD_synthase"/>
</dbReference>
<dbReference type="InterPro" id="IPR022926">
    <property type="entry name" value="NH(3)-dep_NAD(+)_synth"/>
</dbReference>
<dbReference type="InterPro" id="IPR014729">
    <property type="entry name" value="Rossmann-like_a/b/a_fold"/>
</dbReference>
<dbReference type="NCBIfam" id="TIGR00552">
    <property type="entry name" value="nadE"/>
    <property type="match status" value="1"/>
</dbReference>
<dbReference type="NCBIfam" id="NF001979">
    <property type="entry name" value="PRK00768.1"/>
    <property type="match status" value="1"/>
</dbReference>
<dbReference type="PANTHER" id="PTHR23090">
    <property type="entry name" value="NH 3 /GLUTAMINE-DEPENDENT NAD + SYNTHETASE"/>
    <property type="match status" value="1"/>
</dbReference>
<dbReference type="PANTHER" id="PTHR23090:SF7">
    <property type="entry name" value="NH(3)-DEPENDENT NAD(+) SYNTHETASE"/>
    <property type="match status" value="1"/>
</dbReference>
<dbReference type="Pfam" id="PF02540">
    <property type="entry name" value="NAD_synthase"/>
    <property type="match status" value="1"/>
</dbReference>
<dbReference type="SUPFAM" id="SSF52402">
    <property type="entry name" value="Adenine nucleotide alpha hydrolases-like"/>
    <property type="match status" value="1"/>
</dbReference>
<gene>
    <name evidence="1" type="primary">nadE</name>
    <name type="ordered locus">BA_1998</name>
    <name type="ordered locus">GBAA_1998</name>
    <name type="ordered locus">BAS1855</name>
</gene>
<reference key="1">
    <citation type="journal article" date="2003" name="Nature">
        <title>The genome sequence of Bacillus anthracis Ames and comparison to closely related bacteria.</title>
        <authorList>
            <person name="Read T.D."/>
            <person name="Peterson S.N."/>
            <person name="Tourasse N.J."/>
            <person name="Baillie L.W."/>
            <person name="Paulsen I.T."/>
            <person name="Nelson K.E."/>
            <person name="Tettelin H."/>
            <person name="Fouts D.E."/>
            <person name="Eisen J.A."/>
            <person name="Gill S.R."/>
            <person name="Holtzapple E.K."/>
            <person name="Okstad O.A."/>
            <person name="Helgason E."/>
            <person name="Rilstone J."/>
            <person name="Wu M."/>
            <person name="Kolonay J.F."/>
            <person name="Beanan M.J."/>
            <person name="Dodson R.J."/>
            <person name="Brinkac L.M."/>
            <person name="Gwinn M.L."/>
            <person name="DeBoy R.T."/>
            <person name="Madpu R."/>
            <person name="Daugherty S.C."/>
            <person name="Durkin A.S."/>
            <person name="Haft D.H."/>
            <person name="Nelson W.C."/>
            <person name="Peterson J.D."/>
            <person name="Pop M."/>
            <person name="Khouri H.M."/>
            <person name="Radune D."/>
            <person name="Benton J.L."/>
            <person name="Mahamoud Y."/>
            <person name="Jiang L."/>
            <person name="Hance I.R."/>
            <person name="Weidman J.F."/>
            <person name="Berry K.J."/>
            <person name="Plaut R.D."/>
            <person name="Wolf A.M."/>
            <person name="Watkins K.L."/>
            <person name="Nierman W.C."/>
            <person name="Hazen A."/>
            <person name="Cline R.T."/>
            <person name="Redmond C."/>
            <person name="Thwaite J.E."/>
            <person name="White O."/>
            <person name="Salzberg S.L."/>
            <person name="Thomason B."/>
            <person name="Friedlander A.M."/>
            <person name="Koehler T.M."/>
            <person name="Hanna P.C."/>
            <person name="Kolstoe A.-B."/>
            <person name="Fraser C.M."/>
        </authorList>
    </citation>
    <scope>NUCLEOTIDE SEQUENCE [LARGE SCALE GENOMIC DNA]</scope>
    <source>
        <strain>Ames / isolate Porton</strain>
    </source>
</reference>
<reference key="2">
    <citation type="journal article" date="2009" name="J. Bacteriol.">
        <title>The complete genome sequence of Bacillus anthracis Ames 'Ancestor'.</title>
        <authorList>
            <person name="Ravel J."/>
            <person name="Jiang L."/>
            <person name="Stanley S.T."/>
            <person name="Wilson M.R."/>
            <person name="Decker R.S."/>
            <person name="Read T.D."/>
            <person name="Worsham P."/>
            <person name="Keim P.S."/>
            <person name="Salzberg S.L."/>
            <person name="Fraser-Liggett C.M."/>
            <person name="Rasko D.A."/>
        </authorList>
    </citation>
    <scope>NUCLEOTIDE SEQUENCE [LARGE SCALE GENOMIC DNA]</scope>
    <source>
        <strain>Ames ancestor</strain>
    </source>
</reference>
<reference key="3">
    <citation type="submission" date="2004-01" db="EMBL/GenBank/DDBJ databases">
        <title>Complete genome sequence of Bacillus anthracis Sterne.</title>
        <authorList>
            <person name="Brettin T.S."/>
            <person name="Bruce D."/>
            <person name="Challacombe J.F."/>
            <person name="Gilna P."/>
            <person name="Han C."/>
            <person name="Hill K."/>
            <person name="Hitchcock P."/>
            <person name="Jackson P."/>
            <person name="Keim P."/>
            <person name="Longmire J."/>
            <person name="Lucas S."/>
            <person name="Okinaka R."/>
            <person name="Richardson P."/>
            <person name="Rubin E."/>
            <person name="Tice H."/>
        </authorList>
    </citation>
    <scope>NUCLEOTIDE SEQUENCE [LARGE SCALE GENOMIC DNA]</scope>
    <source>
        <strain>Sterne</strain>
    </source>
</reference>
<reference evidence="4 5 6" key="4">
    <citation type="journal article" date="2007" name="Acta Crystallogr. D">
        <title>Structural adaptation of an interacting non-native C-terminal helical extension revealed in the crystal structure of NAD+ synthetase from Bacillus anthracis.</title>
        <authorList>
            <person name="McDonald H.M."/>
            <person name="Pruett P.S."/>
            <person name="Deivanayagam C."/>
            <person name="Protasevich I.I."/>
            <person name="Carson W.M."/>
            <person name="DeLucas L.J."/>
            <person name="Brouillette W.J."/>
            <person name="Brouillette C.G."/>
        </authorList>
    </citation>
    <scope>X-RAY CRYSTALLOGRAPHY (1.90 ANGSTROMS) IN COMPLEXES WITH AMP; DIPHOSPHATE AND SUBSTRATE ANALOG</scope>
    <scope>FUNCTION</scope>
    <scope>CATALYTIC ACTIVITY</scope>
    <scope>BIOPHYSICOCHEMICAL PROPERTIES</scope>
    <scope>SUBUNIT</scope>
</reference>
<keyword id="KW-0002">3D-structure</keyword>
<keyword id="KW-0067">ATP-binding</keyword>
<keyword id="KW-0436">Ligase</keyword>
<keyword id="KW-0460">Magnesium</keyword>
<keyword id="KW-0479">Metal-binding</keyword>
<keyword id="KW-0520">NAD</keyword>
<keyword id="KW-0547">Nucleotide-binding</keyword>
<keyword id="KW-1185">Reference proteome</keyword>
<name>NADE_BACAN</name>
<sequence length="272" mass="30101">MTLQEQIMKALHVQPVIDPKAEIRKRVDFLKDYVKKTGAKGFVLGISGGQDSTLAGRLAQLAVEEIRNEGGNATFIAVRLPYKVQKDEDDAQLALQFIQADQSVAFDIASTVDAFSNQYENLLDESLTDFNKGNVKARIRMVTQYAIGGQKGLLVIGTDHAAEAVTGFFTKFGDGGADLLPLTGLTKRQGRALLQELGADERLYLKMPTADLLDEKPGQADETELGITYDQLDDYLEGKTVPADVAEKIEKRYTVSEHKRQVPASMFDDWWK</sequence>
<evidence type="ECO:0000255" key="1">
    <source>
        <dbReference type="HAMAP-Rule" id="MF_00193"/>
    </source>
</evidence>
<evidence type="ECO:0000269" key="2">
    <source>
    </source>
</evidence>
<evidence type="ECO:0000305" key="3">
    <source>
    </source>
</evidence>
<evidence type="ECO:0007744" key="4">
    <source>
        <dbReference type="PDB" id="2PZ8"/>
    </source>
</evidence>
<evidence type="ECO:0007744" key="5">
    <source>
        <dbReference type="PDB" id="2PZA"/>
    </source>
</evidence>
<evidence type="ECO:0007744" key="6">
    <source>
        <dbReference type="PDB" id="2PZB"/>
    </source>
</evidence>
<evidence type="ECO:0007829" key="7">
    <source>
        <dbReference type="PDB" id="2PZ8"/>
    </source>
</evidence>
<evidence type="ECO:0007829" key="8">
    <source>
        <dbReference type="PDB" id="2PZB"/>
    </source>
</evidence>
<organism>
    <name type="scientific">Bacillus anthracis</name>
    <dbReference type="NCBI Taxonomy" id="1392"/>
    <lineage>
        <taxon>Bacteria</taxon>
        <taxon>Bacillati</taxon>
        <taxon>Bacillota</taxon>
        <taxon>Bacilli</taxon>
        <taxon>Bacillales</taxon>
        <taxon>Bacillaceae</taxon>
        <taxon>Bacillus</taxon>
        <taxon>Bacillus cereus group</taxon>
    </lineage>
</organism>
<comment type="function">
    <text evidence="1 2">Catalyzes the ATP-dependent amidation of deamido-NAD to form NAD. Uses ammonia as a nitrogen source.</text>
</comment>
<comment type="catalytic activity">
    <reaction evidence="1 2">
        <text>deamido-NAD(+) + NH4(+) + ATP = AMP + diphosphate + NAD(+) + H(+)</text>
        <dbReference type="Rhea" id="RHEA:21188"/>
        <dbReference type="ChEBI" id="CHEBI:15378"/>
        <dbReference type="ChEBI" id="CHEBI:28938"/>
        <dbReference type="ChEBI" id="CHEBI:30616"/>
        <dbReference type="ChEBI" id="CHEBI:33019"/>
        <dbReference type="ChEBI" id="CHEBI:57540"/>
        <dbReference type="ChEBI" id="CHEBI:58437"/>
        <dbReference type="ChEBI" id="CHEBI:456215"/>
        <dbReference type="EC" id="6.3.1.5"/>
    </reaction>
</comment>
<comment type="biophysicochemical properties">
    <kinetics>
        <KM evidence="2">289 uM for ATP</KM>
        <KM evidence="2">152 uM for deamido-NAD(+)</KM>
    </kinetics>
    <phDependence>
        <text evidence="2">Optimum pH is 8.</text>
    </phDependence>
</comment>
<comment type="pathway">
    <text evidence="1">Cofactor biosynthesis; NAD(+) biosynthesis; NAD(+) from deamido-NAD(+) (ammonia route): step 1/1.</text>
</comment>
<comment type="subunit">
    <text evidence="1 2">Homodimer.</text>
</comment>
<comment type="similarity">
    <text evidence="1">Belongs to the NAD synthetase family.</text>
</comment>
<proteinExistence type="evidence at protein level"/>
<protein>
    <recommendedName>
        <fullName evidence="1">NH(3)-dependent NAD(+) synthetase</fullName>
        <ecNumber evidence="1">6.3.1.5</ecNumber>
    </recommendedName>
</protein>
<accession>Q81RP3</accession>
<accession>Q6HZW9</accession>
<accession>Q6KTU9</accession>
<feature type="chain" id="PRO_0000152156" description="NH(3)-dependent NAD(+) synthetase">
    <location>
        <begin position="1"/>
        <end position="272"/>
    </location>
</feature>
<feature type="binding site" evidence="1 3">
    <location>
        <begin position="45"/>
        <end position="52"/>
    </location>
    <ligand>
        <name>ATP</name>
        <dbReference type="ChEBI" id="CHEBI:30616"/>
    </ligand>
</feature>
<feature type="binding site" evidence="1 3">
    <location>
        <position position="51"/>
    </location>
    <ligand>
        <name>Mg(2+)</name>
        <dbReference type="ChEBI" id="CHEBI:18420"/>
    </ligand>
</feature>
<feature type="binding site" evidence="1">
    <location>
        <position position="138"/>
    </location>
    <ligand>
        <name>deamido-NAD(+)</name>
        <dbReference type="ChEBI" id="CHEBI:58437"/>
    </ligand>
</feature>
<feature type="binding site" evidence="1 3">
    <location>
        <position position="158"/>
    </location>
    <ligand>
        <name>ATP</name>
        <dbReference type="ChEBI" id="CHEBI:30616"/>
    </ligand>
</feature>
<feature type="binding site" evidence="1 3">
    <location>
        <position position="163"/>
    </location>
    <ligand>
        <name>Mg(2+)</name>
        <dbReference type="ChEBI" id="CHEBI:18420"/>
    </ligand>
</feature>
<feature type="binding site" evidence="1 3">
    <location>
        <position position="171"/>
    </location>
    <ligand>
        <name>deamido-NAD(+)</name>
        <dbReference type="ChEBI" id="CHEBI:58437"/>
    </ligand>
</feature>
<feature type="binding site" evidence="1">
    <location>
        <position position="178"/>
    </location>
    <ligand>
        <name>deamido-NAD(+)</name>
        <dbReference type="ChEBI" id="CHEBI:58437"/>
    </ligand>
</feature>
<feature type="binding site" evidence="1 3">
    <location>
        <position position="187"/>
    </location>
    <ligand>
        <name>ATP</name>
        <dbReference type="ChEBI" id="CHEBI:30616"/>
    </ligand>
</feature>
<feature type="binding site" evidence="1 3">
    <location>
        <position position="209"/>
    </location>
    <ligand>
        <name>ATP</name>
        <dbReference type="ChEBI" id="CHEBI:30616"/>
    </ligand>
</feature>
<feature type="binding site" evidence="1">
    <location>
        <begin position="258"/>
        <end position="259"/>
    </location>
    <ligand>
        <name>deamido-NAD(+)</name>
        <dbReference type="ChEBI" id="CHEBI:58437"/>
    </ligand>
</feature>
<feature type="helix" evidence="8">
    <location>
        <begin position="3"/>
        <end position="11"/>
    </location>
</feature>
<feature type="helix" evidence="8">
    <location>
        <begin position="19"/>
        <end position="37"/>
    </location>
</feature>
<feature type="strand" evidence="8">
    <location>
        <begin position="41"/>
        <end position="45"/>
    </location>
</feature>
<feature type="helix" evidence="8">
    <location>
        <begin position="50"/>
        <end position="68"/>
    </location>
</feature>
<feature type="strand" evidence="8">
    <location>
        <begin position="74"/>
        <end position="79"/>
    </location>
</feature>
<feature type="strand" evidence="7">
    <location>
        <begin position="82"/>
        <end position="84"/>
    </location>
</feature>
<feature type="helix" evidence="8">
    <location>
        <begin position="89"/>
        <end position="98"/>
    </location>
</feature>
<feature type="strand" evidence="8">
    <location>
        <begin position="101"/>
        <end position="105"/>
    </location>
</feature>
<feature type="helix" evidence="8">
    <location>
        <begin position="109"/>
        <end position="122"/>
    </location>
</feature>
<feature type="helix" evidence="8">
    <location>
        <begin position="129"/>
        <end position="151"/>
    </location>
</feature>
<feature type="strand" evidence="8">
    <location>
        <begin position="154"/>
        <end position="156"/>
    </location>
</feature>
<feature type="helix" evidence="8">
    <location>
        <begin position="162"/>
        <end position="166"/>
    </location>
</feature>
<feature type="turn" evidence="7">
    <location>
        <begin position="171"/>
        <end position="175"/>
    </location>
</feature>
<feature type="strand" evidence="7">
    <location>
        <begin position="178"/>
        <end position="180"/>
    </location>
</feature>
<feature type="turn" evidence="8">
    <location>
        <begin position="181"/>
        <end position="184"/>
    </location>
</feature>
<feature type="helix" evidence="8">
    <location>
        <begin position="187"/>
        <end position="196"/>
    </location>
</feature>
<feature type="helix" evidence="8">
    <location>
        <begin position="201"/>
        <end position="203"/>
    </location>
</feature>
<feature type="strand" evidence="7">
    <location>
        <begin position="214"/>
        <end position="216"/>
    </location>
</feature>
<feature type="helix" evidence="7">
    <location>
        <begin position="221"/>
        <end position="225"/>
    </location>
</feature>
<feature type="helix" evidence="8">
    <location>
        <begin position="229"/>
        <end position="236"/>
    </location>
</feature>
<feature type="helix" evidence="8">
    <location>
        <begin position="243"/>
        <end position="255"/>
    </location>
</feature>
<feature type="helix" evidence="7">
    <location>
        <begin position="256"/>
        <end position="260"/>
    </location>
</feature>
<feature type="helix" evidence="8">
    <location>
        <begin position="267"/>
        <end position="272"/>
    </location>
</feature>